<keyword id="KW-0238">DNA-binding</keyword>
<keyword id="KW-1185">Reference proteome</keyword>
<keyword id="KW-0804">Transcription</keyword>
<keyword id="KW-0805">Transcription regulation</keyword>
<comment type="similarity">
    <text evidence="2">Belongs to the LysR transcriptional regulatory family.</text>
</comment>
<dbReference type="EMBL" id="D13169">
    <property type="status" value="NOT_ANNOTATED_CDS"/>
    <property type="molecule type" value="Genomic_DNA"/>
</dbReference>
<dbReference type="EMBL" id="D64044">
    <property type="status" value="NOT_ANNOTATED_CDS"/>
    <property type="molecule type" value="Genomic_DNA"/>
</dbReference>
<dbReference type="EMBL" id="U00096">
    <property type="protein sequence ID" value="AAC75630.2"/>
    <property type="molecule type" value="Genomic_DNA"/>
</dbReference>
<dbReference type="EMBL" id="AP009048">
    <property type="protein sequence ID" value="BAA20920.2"/>
    <property type="molecule type" value="Genomic_DNA"/>
</dbReference>
<dbReference type="PIR" id="H65035">
    <property type="entry name" value="H65035"/>
</dbReference>
<dbReference type="RefSeq" id="NP_417072.4">
    <property type="nucleotide sequence ID" value="NC_000913.3"/>
</dbReference>
<dbReference type="RefSeq" id="WP_001300638.1">
    <property type="nucleotide sequence ID" value="NZ_LN832404.1"/>
</dbReference>
<dbReference type="SMR" id="P33634"/>
<dbReference type="BioGRID" id="4261636">
    <property type="interactions" value="170"/>
</dbReference>
<dbReference type="FunCoup" id="P33634">
    <property type="interactions" value="61"/>
</dbReference>
<dbReference type="IntAct" id="P33634">
    <property type="interactions" value="3"/>
</dbReference>
<dbReference type="STRING" id="511145.b2577"/>
<dbReference type="PaxDb" id="511145-b2577"/>
<dbReference type="EnsemblBacteria" id="AAC75630">
    <property type="protein sequence ID" value="AAC75630"/>
    <property type="gene ID" value="b2577"/>
</dbReference>
<dbReference type="GeneID" id="947064"/>
<dbReference type="KEGG" id="ecj:JW2561"/>
<dbReference type="KEGG" id="eco:b2577"/>
<dbReference type="KEGG" id="ecoc:C3026_14280"/>
<dbReference type="PATRIC" id="fig|1411691.4.peg.4157"/>
<dbReference type="EchoBASE" id="EB1733"/>
<dbReference type="eggNOG" id="COG0583">
    <property type="taxonomic scope" value="Bacteria"/>
</dbReference>
<dbReference type="HOGENOM" id="CLU_039613_6_1_6"/>
<dbReference type="InParanoid" id="P33634"/>
<dbReference type="OMA" id="SAKYFVP"/>
<dbReference type="OrthoDB" id="5723059at2"/>
<dbReference type="PhylomeDB" id="P33634"/>
<dbReference type="BioCyc" id="EcoCyc:EG11785-MONOMER"/>
<dbReference type="PRO" id="PR:P33634"/>
<dbReference type="Proteomes" id="UP000000625">
    <property type="component" value="Chromosome"/>
</dbReference>
<dbReference type="GO" id="GO:0003700">
    <property type="term" value="F:DNA-binding transcription factor activity"/>
    <property type="evidence" value="ECO:0007669"/>
    <property type="project" value="InterPro"/>
</dbReference>
<dbReference type="GO" id="GO:0000976">
    <property type="term" value="F:transcription cis-regulatory region binding"/>
    <property type="evidence" value="ECO:0000318"/>
    <property type="project" value="GO_Central"/>
</dbReference>
<dbReference type="GO" id="GO:0006355">
    <property type="term" value="P:regulation of DNA-templated transcription"/>
    <property type="evidence" value="ECO:0000318"/>
    <property type="project" value="GO_Central"/>
</dbReference>
<dbReference type="CDD" id="cd05466">
    <property type="entry name" value="PBP2_LTTR_substrate"/>
    <property type="match status" value="1"/>
</dbReference>
<dbReference type="FunFam" id="3.40.190.290:FF:000019">
    <property type="entry name" value="Transcriptional regulator, LysR family"/>
    <property type="match status" value="1"/>
</dbReference>
<dbReference type="Gene3D" id="3.40.190.290">
    <property type="match status" value="1"/>
</dbReference>
<dbReference type="Gene3D" id="1.10.10.10">
    <property type="entry name" value="Winged helix-like DNA-binding domain superfamily/Winged helix DNA-binding domain"/>
    <property type="match status" value="1"/>
</dbReference>
<dbReference type="InterPro" id="IPR005119">
    <property type="entry name" value="LysR_subst-bd"/>
</dbReference>
<dbReference type="InterPro" id="IPR000847">
    <property type="entry name" value="Tscrpt_reg_HTH_LysR"/>
</dbReference>
<dbReference type="InterPro" id="IPR036388">
    <property type="entry name" value="WH-like_DNA-bd_sf"/>
</dbReference>
<dbReference type="InterPro" id="IPR036390">
    <property type="entry name" value="WH_DNA-bd_sf"/>
</dbReference>
<dbReference type="PANTHER" id="PTHR30126:SF5">
    <property type="entry name" value="HTH-TYPE TRANSCRIPTIONAL ACTIVATOR CMPR"/>
    <property type="match status" value="1"/>
</dbReference>
<dbReference type="PANTHER" id="PTHR30126">
    <property type="entry name" value="HTH-TYPE TRANSCRIPTIONAL REGULATOR"/>
    <property type="match status" value="1"/>
</dbReference>
<dbReference type="Pfam" id="PF00126">
    <property type="entry name" value="HTH_1"/>
    <property type="match status" value="1"/>
</dbReference>
<dbReference type="Pfam" id="PF03466">
    <property type="entry name" value="LysR_substrate"/>
    <property type="match status" value="1"/>
</dbReference>
<dbReference type="SUPFAM" id="SSF53850">
    <property type="entry name" value="Periplasmic binding protein-like II"/>
    <property type="match status" value="1"/>
</dbReference>
<dbReference type="SUPFAM" id="SSF46785">
    <property type="entry name" value="Winged helix' DNA-binding domain"/>
    <property type="match status" value="1"/>
</dbReference>
<dbReference type="PROSITE" id="PS50931">
    <property type="entry name" value="HTH_LYSR"/>
    <property type="match status" value="1"/>
</dbReference>
<evidence type="ECO:0000255" key="1">
    <source>
        <dbReference type="PROSITE-ProRule" id="PRU00253"/>
    </source>
</evidence>
<evidence type="ECO:0000305" key="2"/>
<proteinExistence type="inferred from homology"/>
<protein>
    <recommendedName>
        <fullName>Uncharacterized HTH-type transcriptional regulator YfiE</fullName>
    </recommendedName>
</protein>
<organism>
    <name type="scientific">Escherichia coli (strain K12)</name>
    <dbReference type="NCBI Taxonomy" id="83333"/>
    <lineage>
        <taxon>Bacteria</taxon>
        <taxon>Pseudomonadati</taxon>
        <taxon>Pseudomonadota</taxon>
        <taxon>Gammaproteobacteria</taxon>
        <taxon>Enterobacterales</taxon>
        <taxon>Enterobacteriaceae</taxon>
        <taxon>Escherichia</taxon>
    </lineage>
</organism>
<sequence>MDLRRFITLKTVVEEGSFLRASQKLCCTQSTVTFHIQQLEQEFSVQLFEKIGRRMCLTREGKKLLPHIYELTRVMDTLREAAKKESDPDGELRVVSGETLLSYRMPQVLQRFRQRAPKVRLSLQSLNCYVIRDALLNDEADVGVFYRVGNDDALNRRELGEQSLVLVASPQIADVDFTEPGRHNACSFIINEPQCVFRQIFESTLRQRRITVENTIELISIESIKRCVAANIGVSYLPRFAVAKELECGELIELPFGEQSQTITAMCAHHAGKAVSPAMHTFIQCVEESFVAG</sequence>
<reference key="1">
    <citation type="book" date="1993" name="The translational apparatus">
        <title>Non-ribosomal proteins affecting the assembly of ribosomes in Escherichia coli.</title>
        <editorList>
            <person name="Nierhaus K.H."/>
        </editorList>
        <authorList>
            <person name="Nashimoto H."/>
        </authorList>
    </citation>
    <scope>NUCLEOTIDE SEQUENCE [GENOMIC DNA]</scope>
    <source>
        <strain>K12</strain>
    </source>
</reference>
<reference key="2">
    <citation type="submission" date="1995-09" db="EMBL/GenBank/DDBJ databases">
        <authorList>
            <person name="Nashimoto H."/>
            <person name="Saito N."/>
        </authorList>
    </citation>
    <scope>NUCLEOTIDE SEQUENCE [GENOMIC DNA]</scope>
    <source>
        <strain>K12</strain>
    </source>
</reference>
<reference key="3">
    <citation type="journal article" date="1997" name="Science">
        <title>The complete genome sequence of Escherichia coli K-12.</title>
        <authorList>
            <person name="Blattner F.R."/>
            <person name="Plunkett G. III"/>
            <person name="Bloch C.A."/>
            <person name="Perna N.T."/>
            <person name="Burland V."/>
            <person name="Riley M."/>
            <person name="Collado-Vides J."/>
            <person name="Glasner J.D."/>
            <person name="Rode C.K."/>
            <person name="Mayhew G.F."/>
            <person name="Gregor J."/>
            <person name="Davis N.W."/>
            <person name="Kirkpatrick H.A."/>
            <person name="Goeden M.A."/>
            <person name="Rose D.J."/>
            <person name="Mau B."/>
            <person name="Shao Y."/>
        </authorList>
    </citation>
    <scope>NUCLEOTIDE SEQUENCE [LARGE SCALE GENOMIC DNA]</scope>
    <source>
        <strain>K12 / MG1655 / ATCC 47076</strain>
    </source>
</reference>
<reference key="4">
    <citation type="journal article" date="2006" name="Mol. Syst. Biol.">
        <title>Highly accurate genome sequences of Escherichia coli K-12 strains MG1655 and W3110.</title>
        <authorList>
            <person name="Hayashi K."/>
            <person name="Morooka N."/>
            <person name="Yamamoto Y."/>
            <person name="Fujita K."/>
            <person name="Isono K."/>
            <person name="Choi S."/>
            <person name="Ohtsubo E."/>
            <person name="Baba T."/>
            <person name="Wanner B.L."/>
            <person name="Mori H."/>
            <person name="Horiuchi T."/>
        </authorList>
    </citation>
    <scope>NUCLEOTIDE SEQUENCE [LARGE SCALE GENOMIC DNA]</scope>
    <source>
        <strain>K12 / W3110 / ATCC 27325 / DSM 5911</strain>
    </source>
</reference>
<reference key="5">
    <citation type="journal article" date="1997" name="DNA Res.">
        <title>Construction of a contiguous 874-kb sequence of the Escherichia coli-K12 genome corresponding to 50.0-68.8 min on the linkage map and analysis of its sequence features.</title>
        <authorList>
            <person name="Yamamoto Y."/>
            <person name="Aiba H."/>
            <person name="Baba T."/>
            <person name="Hayashi K."/>
            <person name="Inada T."/>
            <person name="Isono K."/>
            <person name="Itoh T."/>
            <person name="Kimura S."/>
            <person name="Kitagawa M."/>
            <person name="Makino K."/>
            <person name="Miki T."/>
            <person name="Mitsuhashi N."/>
            <person name="Mizobuchi K."/>
            <person name="Mori H."/>
            <person name="Nakade S."/>
            <person name="Nakamura Y."/>
            <person name="Nashimoto H."/>
            <person name="Oshima T."/>
            <person name="Oyama S."/>
            <person name="Saito N."/>
            <person name="Sampei G."/>
            <person name="Satoh Y."/>
            <person name="Sivasundaram S."/>
            <person name="Tagami H."/>
            <person name="Takahashi H."/>
            <person name="Takeda J."/>
            <person name="Takemoto K."/>
            <person name="Uehara K."/>
            <person name="Wada C."/>
            <person name="Yamagata S."/>
            <person name="Horiuchi T."/>
        </authorList>
    </citation>
    <scope>NUCLEOTIDE SEQUENCE [LARGE SCALE GENOMIC DNA] OF 1-208</scope>
    <source>
        <strain>K12 / W3110 / ATCC 27325 / DSM 5911</strain>
    </source>
</reference>
<accession>P33634</accession>
<accession>P76592</accession>
<accession>P76998</accession>
<feature type="chain" id="PRO_0000105793" description="Uncharacterized HTH-type transcriptional regulator YfiE">
    <location>
        <begin position="1"/>
        <end position="293"/>
    </location>
</feature>
<feature type="domain" description="HTH lysR-type" evidence="1">
    <location>
        <begin position="1"/>
        <end position="58"/>
    </location>
</feature>
<feature type="DNA-binding region" description="H-T-H motif" evidence="1">
    <location>
        <begin position="18"/>
        <end position="37"/>
    </location>
</feature>
<feature type="sequence conflict" description="In Ref. 1; D13169 and 2; D64044." evidence="2" ref="1 2">
    <original>RITVENTIELISIESIKRCVAANIGVSYLPRFAVAKELECGELIELPFGEQSQTITAMCAHHAGKAVSPAMHTFIQCVEESFVAG</original>
    <variation>DHGGKHH</variation>
    <location>
        <begin position="209"/>
        <end position="293"/>
    </location>
</feature>
<name>YFIE_ECOLI</name>
<gene>
    <name type="primary">yfiE</name>
    <name type="ordered locus">b2577</name>
    <name type="ordered locus">JW2561</name>
</gene>